<protein>
    <recommendedName>
        <fullName evidence="1">tRNA dimethylallyltransferase</fullName>
        <ecNumber evidence="1">2.5.1.75</ecNumber>
    </recommendedName>
    <alternativeName>
        <fullName evidence="1">Dimethylallyl diphosphate:tRNA dimethylallyltransferase</fullName>
        <shortName evidence="1">DMAPP:tRNA dimethylallyltransferase</shortName>
        <shortName evidence="1">DMATase</shortName>
    </alternativeName>
    <alternativeName>
        <fullName evidence="1">Isopentenyl-diphosphate:tRNA isopentenyltransferase</fullName>
        <shortName evidence="1">IPP transferase</shortName>
        <shortName evidence="1">IPPT</shortName>
        <shortName evidence="1">IPTase</shortName>
    </alternativeName>
</protein>
<sequence length="324" mass="35095">MSERNAASARTVACLLGPTASGKTAAALALAARRPIEIVSVDSALVYRGMDIGTAKPTRDERAAVPHHLIDIVDPADAYSAAEFRADALRLVAQIAARGRTPLLAGGTMLYYRALTQGLNDLPAADPDVRATLDADAARDGWPALHARLAGIDPATAARLAPNDSQRIQRALEVYLLTGQPMSALLAAPPRDNDAAAGLRFVPVALEPSERAVLHARIAARFDAMLEAGFIDEVERLRRRDDLHLGLPSMRCVGYRQAWEYLDGCTDYRTMRDKGIFATRQLCKRQLTWLRAMPERIVVDCCAPDATVRAVDALERVLDGRAPA</sequence>
<accession>A2S552</accession>
<feature type="chain" id="PRO_1000020574" description="tRNA dimethylallyltransferase">
    <location>
        <begin position="1"/>
        <end position="324"/>
    </location>
</feature>
<feature type="region of interest" description="Interaction with substrate tRNA" evidence="1">
    <location>
        <begin position="42"/>
        <end position="45"/>
    </location>
</feature>
<feature type="region of interest" description="Interaction with substrate tRNA" evidence="1">
    <location>
        <begin position="166"/>
        <end position="170"/>
    </location>
</feature>
<feature type="region of interest" description="Interaction with substrate tRNA" evidence="1">
    <location>
        <begin position="251"/>
        <end position="256"/>
    </location>
</feature>
<feature type="binding site" evidence="1">
    <location>
        <begin position="17"/>
        <end position="24"/>
    </location>
    <ligand>
        <name>ATP</name>
        <dbReference type="ChEBI" id="CHEBI:30616"/>
    </ligand>
</feature>
<feature type="binding site" evidence="1">
    <location>
        <begin position="19"/>
        <end position="24"/>
    </location>
    <ligand>
        <name>substrate</name>
    </ligand>
</feature>
<feature type="site" description="Interaction with substrate tRNA" evidence="1">
    <location>
        <position position="108"/>
    </location>
</feature>
<feature type="site" description="Interaction with substrate tRNA" evidence="1">
    <location>
        <position position="130"/>
    </location>
</feature>
<evidence type="ECO:0000255" key="1">
    <source>
        <dbReference type="HAMAP-Rule" id="MF_00185"/>
    </source>
</evidence>
<comment type="function">
    <text evidence="1">Catalyzes the transfer of a dimethylallyl group onto the adenine at position 37 in tRNAs that read codons beginning with uridine, leading to the formation of N6-(dimethylallyl)adenosine (i(6)A).</text>
</comment>
<comment type="catalytic activity">
    <reaction evidence="1">
        <text>adenosine(37) in tRNA + dimethylallyl diphosphate = N(6)-dimethylallyladenosine(37) in tRNA + diphosphate</text>
        <dbReference type="Rhea" id="RHEA:26482"/>
        <dbReference type="Rhea" id="RHEA-COMP:10162"/>
        <dbReference type="Rhea" id="RHEA-COMP:10375"/>
        <dbReference type="ChEBI" id="CHEBI:33019"/>
        <dbReference type="ChEBI" id="CHEBI:57623"/>
        <dbReference type="ChEBI" id="CHEBI:74411"/>
        <dbReference type="ChEBI" id="CHEBI:74415"/>
        <dbReference type="EC" id="2.5.1.75"/>
    </reaction>
</comment>
<comment type="cofactor">
    <cofactor evidence="1">
        <name>Mg(2+)</name>
        <dbReference type="ChEBI" id="CHEBI:18420"/>
    </cofactor>
</comment>
<comment type="subunit">
    <text evidence="1">Monomer.</text>
</comment>
<comment type="similarity">
    <text evidence="1">Belongs to the IPP transferase family.</text>
</comment>
<keyword id="KW-0067">ATP-binding</keyword>
<keyword id="KW-0460">Magnesium</keyword>
<keyword id="KW-0547">Nucleotide-binding</keyword>
<keyword id="KW-0808">Transferase</keyword>
<keyword id="KW-0819">tRNA processing</keyword>
<proteinExistence type="inferred from homology"/>
<dbReference type="EC" id="2.5.1.75" evidence="1"/>
<dbReference type="EMBL" id="CP000546">
    <property type="protein sequence ID" value="ABN01884.1"/>
    <property type="molecule type" value="Genomic_DNA"/>
</dbReference>
<dbReference type="RefSeq" id="WP_004194103.1">
    <property type="nucleotide sequence ID" value="NC_008836.1"/>
</dbReference>
<dbReference type="SMR" id="A2S552"/>
<dbReference type="GeneID" id="92980007"/>
<dbReference type="KEGG" id="bml:BMA10229_A1086"/>
<dbReference type="HOGENOM" id="CLU_032616_0_0_4"/>
<dbReference type="Proteomes" id="UP000002283">
    <property type="component" value="Chromosome I"/>
</dbReference>
<dbReference type="GO" id="GO:0005524">
    <property type="term" value="F:ATP binding"/>
    <property type="evidence" value="ECO:0007669"/>
    <property type="project" value="UniProtKB-UniRule"/>
</dbReference>
<dbReference type="GO" id="GO:0052381">
    <property type="term" value="F:tRNA dimethylallyltransferase activity"/>
    <property type="evidence" value="ECO:0007669"/>
    <property type="project" value="UniProtKB-UniRule"/>
</dbReference>
<dbReference type="GO" id="GO:0006400">
    <property type="term" value="P:tRNA modification"/>
    <property type="evidence" value="ECO:0007669"/>
    <property type="project" value="TreeGrafter"/>
</dbReference>
<dbReference type="FunFam" id="1.10.20.140:FF:000001">
    <property type="entry name" value="tRNA dimethylallyltransferase"/>
    <property type="match status" value="1"/>
</dbReference>
<dbReference type="Gene3D" id="1.10.20.140">
    <property type="match status" value="1"/>
</dbReference>
<dbReference type="Gene3D" id="3.40.50.300">
    <property type="entry name" value="P-loop containing nucleotide triphosphate hydrolases"/>
    <property type="match status" value="1"/>
</dbReference>
<dbReference type="HAMAP" id="MF_00185">
    <property type="entry name" value="IPP_trans"/>
    <property type="match status" value="1"/>
</dbReference>
<dbReference type="InterPro" id="IPR039657">
    <property type="entry name" value="Dimethylallyltransferase"/>
</dbReference>
<dbReference type="InterPro" id="IPR018022">
    <property type="entry name" value="IPT"/>
</dbReference>
<dbReference type="InterPro" id="IPR027417">
    <property type="entry name" value="P-loop_NTPase"/>
</dbReference>
<dbReference type="NCBIfam" id="TIGR00174">
    <property type="entry name" value="miaA"/>
    <property type="match status" value="1"/>
</dbReference>
<dbReference type="PANTHER" id="PTHR11088">
    <property type="entry name" value="TRNA DIMETHYLALLYLTRANSFERASE"/>
    <property type="match status" value="1"/>
</dbReference>
<dbReference type="PANTHER" id="PTHR11088:SF60">
    <property type="entry name" value="TRNA DIMETHYLALLYLTRANSFERASE"/>
    <property type="match status" value="1"/>
</dbReference>
<dbReference type="Pfam" id="PF01715">
    <property type="entry name" value="IPPT"/>
    <property type="match status" value="1"/>
</dbReference>
<dbReference type="SUPFAM" id="SSF52540">
    <property type="entry name" value="P-loop containing nucleoside triphosphate hydrolases"/>
    <property type="match status" value="2"/>
</dbReference>
<organism>
    <name type="scientific">Burkholderia mallei (strain NCTC 10229)</name>
    <dbReference type="NCBI Taxonomy" id="412022"/>
    <lineage>
        <taxon>Bacteria</taxon>
        <taxon>Pseudomonadati</taxon>
        <taxon>Pseudomonadota</taxon>
        <taxon>Betaproteobacteria</taxon>
        <taxon>Burkholderiales</taxon>
        <taxon>Burkholderiaceae</taxon>
        <taxon>Burkholderia</taxon>
        <taxon>pseudomallei group</taxon>
    </lineage>
</organism>
<reference key="1">
    <citation type="journal article" date="2010" name="Genome Biol. Evol.">
        <title>Continuing evolution of Burkholderia mallei through genome reduction and large-scale rearrangements.</title>
        <authorList>
            <person name="Losada L."/>
            <person name="Ronning C.M."/>
            <person name="DeShazer D."/>
            <person name="Woods D."/>
            <person name="Fedorova N."/>
            <person name="Kim H.S."/>
            <person name="Shabalina S.A."/>
            <person name="Pearson T.R."/>
            <person name="Brinkac L."/>
            <person name="Tan P."/>
            <person name="Nandi T."/>
            <person name="Crabtree J."/>
            <person name="Badger J."/>
            <person name="Beckstrom-Sternberg S."/>
            <person name="Saqib M."/>
            <person name="Schutzer S.E."/>
            <person name="Keim P."/>
            <person name="Nierman W.C."/>
        </authorList>
    </citation>
    <scope>NUCLEOTIDE SEQUENCE [LARGE SCALE GENOMIC DNA]</scope>
    <source>
        <strain>NCTC 10229</strain>
    </source>
</reference>
<gene>
    <name evidence="1" type="primary">miaA</name>
    <name type="ordered locus">BMA10229_A1086</name>
</gene>
<name>MIAA_BURM9</name>